<gene>
    <name evidence="1" type="primary">gltX</name>
    <name type="ordered locus">Sare_3615</name>
</gene>
<keyword id="KW-0030">Aminoacyl-tRNA synthetase</keyword>
<keyword id="KW-0067">ATP-binding</keyword>
<keyword id="KW-0963">Cytoplasm</keyword>
<keyword id="KW-0436">Ligase</keyword>
<keyword id="KW-0479">Metal-binding</keyword>
<keyword id="KW-0547">Nucleotide-binding</keyword>
<keyword id="KW-0648">Protein biosynthesis</keyword>
<keyword id="KW-0862">Zinc</keyword>
<evidence type="ECO:0000255" key="1">
    <source>
        <dbReference type="HAMAP-Rule" id="MF_00022"/>
    </source>
</evidence>
<protein>
    <recommendedName>
        <fullName evidence="1">Glutamate--tRNA ligase</fullName>
        <ecNumber evidence="1">6.1.1.17</ecNumber>
    </recommendedName>
    <alternativeName>
        <fullName evidence="1">Glutamyl-tRNA synthetase</fullName>
        <shortName evidence="1">GluRS</shortName>
    </alternativeName>
</protein>
<comment type="function">
    <text evidence="1">Catalyzes the attachment of glutamate to tRNA(Glu) in a two-step reaction: glutamate is first activated by ATP to form Glu-AMP and then transferred to the acceptor end of tRNA(Glu).</text>
</comment>
<comment type="catalytic activity">
    <reaction evidence="1">
        <text>tRNA(Glu) + L-glutamate + ATP = L-glutamyl-tRNA(Glu) + AMP + diphosphate</text>
        <dbReference type="Rhea" id="RHEA:23540"/>
        <dbReference type="Rhea" id="RHEA-COMP:9663"/>
        <dbReference type="Rhea" id="RHEA-COMP:9680"/>
        <dbReference type="ChEBI" id="CHEBI:29985"/>
        <dbReference type="ChEBI" id="CHEBI:30616"/>
        <dbReference type="ChEBI" id="CHEBI:33019"/>
        <dbReference type="ChEBI" id="CHEBI:78442"/>
        <dbReference type="ChEBI" id="CHEBI:78520"/>
        <dbReference type="ChEBI" id="CHEBI:456215"/>
        <dbReference type="EC" id="6.1.1.17"/>
    </reaction>
</comment>
<comment type="cofactor">
    <cofactor evidence="1">
        <name>Zn(2+)</name>
        <dbReference type="ChEBI" id="CHEBI:29105"/>
    </cofactor>
    <text evidence="1">Binds 1 zinc ion per subunit.</text>
</comment>
<comment type="subunit">
    <text evidence="1">Monomer.</text>
</comment>
<comment type="subcellular location">
    <subcellularLocation>
        <location evidence="1">Cytoplasm</location>
    </subcellularLocation>
</comment>
<comment type="similarity">
    <text evidence="1">Belongs to the class-I aminoacyl-tRNA synthetase family. Glutamate--tRNA ligase type 1 subfamily.</text>
</comment>
<dbReference type="EC" id="6.1.1.17" evidence="1"/>
<dbReference type="EMBL" id="CP000850">
    <property type="protein sequence ID" value="ABV99413.1"/>
    <property type="molecule type" value="Genomic_DNA"/>
</dbReference>
<dbReference type="SMR" id="A8LZ53"/>
<dbReference type="STRING" id="391037.Sare_3615"/>
<dbReference type="KEGG" id="saq:Sare_3615"/>
<dbReference type="eggNOG" id="COG0008">
    <property type="taxonomic scope" value="Bacteria"/>
</dbReference>
<dbReference type="HOGENOM" id="CLU_015768_6_3_11"/>
<dbReference type="OrthoDB" id="9807503at2"/>
<dbReference type="GO" id="GO:0005829">
    <property type="term" value="C:cytosol"/>
    <property type="evidence" value="ECO:0007669"/>
    <property type="project" value="TreeGrafter"/>
</dbReference>
<dbReference type="GO" id="GO:0005524">
    <property type="term" value="F:ATP binding"/>
    <property type="evidence" value="ECO:0007669"/>
    <property type="project" value="UniProtKB-UniRule"/>
</dbReference>
<dbReference type="GO" id="GO:0004818">
    <property type="term" value="F:glutamate-tRNA ligase activity"/>
    <property type="evidence" value="ECO:0007669"/>
    <property type="project" value="UniProtKB-UniRule"/>
</dbReference>
<dbReference type="GO" id="GO:0000049">
    <property type="term" value="F:tRNA binding"/>
    <property type="evidence" value="ECO:0007669"/>
    <property type="project" value="InterPro"/>
</dbReference>
<dbReference type="GO" id="GO:0008270">
    <property type="term" value="F:zinc ion binding"/>
    <property type="evidence" value="ECO:0007669"/>
    <property type="project" value="UniProtKB-UniRule"/>
</dbReference>
<dbReference type="GO" id="GO:0006424">
    <property type="term" value="P:glutamyl-tRNA aminoacylation"/>
    <property type="evidence" value="ECO:0007669"/>
    <property type="project" value="UniProtKB-UniRule"/>
</dbReference>
<dbReference type="CDD" id="cd00808">
    <property type="entry name" value="GluRS_core"/>
    <property type="match status" value="1"/>
</dbReference>
<dbReference type="Gene3D" id="1.10.10.350">
    <property type="match status" value="1"/>
</dbReference>
<dbReference type="Gene3D" id="1.10.8.70">
    <property type="entry name" value="Glutamate-tRNA synthetase, class I, anticodon-binding domain 1"/>
    <property type="match status" value="1"/>
</dbReference>
<dbReference type="Gene3D" id="3.40.50.620">
    <property type="entry name" value="HUPs"/>
    <property type="match status" value="1"/>
</dbReference>
<dbReference type="HAMAP" id="MF_00022">
    <property type="entry name" value="Glu_tRNA_synth_type1"/>
    <property type="match status" value="1"/>
</dbReference>
<dbReference type="InterPro" id="IPR045462">
    <property type="entry name" value="aa-tRNA-synth_I_cd-bd"/>
</dbReference>
<dbReference type="InterPro" id="IPR020751">
    <property type="entry name" value="aa-tRNA-synth_I_codon-bd_sub2"/>
</dbReference>
<dbReference type="InterPro" id="IPR001412">
    <property type="entry name" value="aa-tRNA-synth_I_CS"/>
</dbReference>
<dbReference type="InterPro" id="IPR008925">
    <property type="entry name" value="aa_tRNA-synth_I_cd-bd_sf"/>
</dbReference>
<dbReference type="InterPro" id="IPR004527">
    <property type="entry name" value="Glu-tRNA-ligase_bac/mito"/>
</dbReference>
<dbReference type="InterPro" id="IPR020752">
    <property type="entry name" value="Glu-tRNA-synth_I_codon-bd_sub1"/>
</dbReference>
<dbReference type="InterPro" id="IPR000924">
    <property type="entry name" value="Glu/Gln-tRNA-synth"/>
</dbReference>
<dbReference type="InterPro" id="IPR020058">
    <property type="entry name" value="Glu/Gln-tRNA-synth_Ib_cat-dom"/>
</dbReference>
<dbReference type="InterPro" id="IPR049940">
    <property type="entry name" value="GluQ/Sye"/>
</dbReference>
<dbReference type="InterPro" id="IPR033910">
    <property type="entry name" value="GluRS_core"/>
</dbReference>
<dbReference type="InterPro" id="IPR014729">
    <property type="entry name" value="Rossmann-like_a/b/a_fold"/>
</dbReference>
<dbReference type="NCBIfam" id="TIGR00464">
    <property type="entry name" value="gltX_bact"/>
    <property type="match status" value="1"/>
</dbReference>
<dbReference type="PANTHER" id="PTHR43311">
    <property type="entry name" value="GLUTAMATE--TRNA LIGASE"/>
    <property type="match status" value="1"/>
</dbReference>
<dbReference type="PANTHER" id="PTHR43311:SF2">
    <property type="entry name" value="GLUTAMATE--TRNA LIGASE, MITOCHONDRIAL-RELATED"/>
    <property type="match status" value="1"/>
</dbReference>
<dbReference type="Pfam" id="PF19269">
    <property type="entry name" value="Anticodon_2"/>
    <property type="match status" value="1"/>
</dbReference>
<dbReference type="Pfam" id="PF00749">
    <property type="entry name" value="tRNA-synt_1c"/>
    <property type="match status" value="1"/>
</dbReference>
<dbReference type="PRINTS" id="PR00987">
    <property type="entry name" value="TRNASYNTHGLU"/>
</dbReference>
<dbReference type="SUPFAM" id="SSF48163">
    <property type="entry name" value="An anticodon-binding domain of class I aminoacyl-tRNA synthetases"/>
    <property type="match status" value="1"/>
</dbReference>
<dbReference type="SUPFAM" id="SSF52374">
    <property type="entry name" value="Nucleotidylyl transferase"/>
    <property type="match status" value="1"/>
</dbReference>
<dbReference type="PROSITE" id="PS00178">
    <property type="entry name" value="AA_TRNA_LIGASE_I"/>
    <property type="match status" value="1"/>
</dbReference>
<proteinExistence type="inferred from homology"/>
<feature type="chain" id="PRO_0000330996" description="Glutamate--tRNA ligase">
    <location>
        <begin position="1"/>
        <end position="469"/>
    </location>
</feature>
<feature type="short sequence motif" description="'HIGH' region" evidence="1">
    <location>
        <begin position="9"/>
        <end position="19"/>
    </location>
</feature>
<feature type="short sequence motif" description="'KMSKS' region" evidence="1">
    <location>
        <begin position="232"/>
        <end position="236"/>
    </location>
</feature>
<feature type="binding site" evidence="1">
    <location>
        <position position="100"/>
    </location>
    <ligand>
        <name>Zn(2+)</name>
        <dbReference type="ChEBI" id="CHEBI:29105"/>
    </ligand>
</feature>
<feature type="binding site" evidence="1">
    <location>
        <position position="102"/>
    </location>
    <ligand>
        <name>Zn(2+)</name>
        <dbReference type="ChEBI" id="CHEBI:29105"/>
    </ligand>
</feature>
<feature type="binding site" evidence="1">
    <location>
        <position position="122"/>
    </location>
    <ligand>
        <name>Zn(2+)</name>
        <dbReference type="ChEBI" id="CHEBI:29105"/>
    </ligand>
</feature>
<feature type="binding site" evidence="1">
    <location>
        <position position="124"/>
    </location>
    <ligand>
        <name>Zn(2+)</name>
        <dbReference type="ChEBI" id="CHEBI:29105"/>
    </ligand>
</feature>
<feature type="binding site" evidence="1">
    <location>
        <position position="235"/>
    </location>
    <ligand>
        <name>ATP</name>
        <dbReference type="ChEBI" id="CHEBI:30616"/>
    </ligand>
</feature>
<reference key="1">
    <citation type="submission" date="2007-10" db="EMBL/GenBank/DDBJ databases">
        <title>Complete sequence of Salinispora arenicola CNS-205.</title>
        <authorList>
            <consortium name="US DOE Joint Genome Institute"/>
            <person name="Copeland A."/>
            <person name="Lucas S."/>
            <person name="Lapidus A."/>
            <person name="Barry K."/>
            <person name="Glavina del Rio T."/>
            <person name="Dalin E."/>
            <person name="Tice H."/>
            <person name="Pitluck S."/>
            <person name="Foster B."/>
            <person name="Schmutz J."/>
            <person name="Larimer F."/>
            <person name="Land M."/>
            <person name="Hauser L."/>
            <person name="Kyrpides N."/>
            <person name="Ivanova N."/>
            <person name="Jensen P.R."/>
            <person name="Moore B.S."/>
            <person name="Penn K."/>
            <person name="Jenkins C."/>
            <person name="Udwary D."/>
            <person name="Xiang L."/>
            <person name="Gontang E."/>
            <person name="Richardson P."/>
        </authorList>
    </citation>
    <scope>NUCLEOTIDE SEQUENCE [LARGE SCALE GENOMIC DNA]</scope>
    <source>
        <strain>CNS-205</strain>
    </source>
</reference>
<name>SYE_SALAI</name>
<sequence>MTVRVRFAPSPTGMFHVGGARSALQNWIFAKQRGGVFVLRVEDTDAARNKPEWTEGILSALEWIGIARGSYEGPYFQSSYAAEHRTAASRLHEGGRAYYCDCTREAVQARTGSPHSGYDGFCRDRDLGPGAGRALRFRTPDEGATVVVDLIRGEPTFENRLIEDFVIARSDGSPVFLLANVVDDMTMGITHVIRAEEHLPNTPKQQLLWEALGVKPPVWAHVPVVVNEKRQKLSKRRDKVALEAYRDEGYLADAMRNYLMLLGWAPSGDREIVPWPVIEEEFRLEQVNPSSAFFDEKKLRAFNGEYIRALPVAEFVAACQPWLTGTATIAPPPWQPDEFDADTFAAVAPLAQTRIAVLSEIVANVDFLFLDSPLIDEGAWAKAMKEGAGDLLDAAITAFTAIPSWDAESTKSALEAVGAEHGLKLGKAQAPVRVAVTGRRVGLPLFESLEVLGRERTLTRLRAARVRLP</sequence>
<accession>A8LZ53</accession>
<organism>
    <name type="scientific">Salinispora arenicola (strain CNS-205)</name>
    <dbReference type="NCBI Taxonomy" id="391037"/>
    <lineage>
        <taxon>Bacteria</taxon>
        <taxon>Bacillati</taxon>
        <taxon>Actinomycetota</taxon>
        <taxon>Actinomycetes</taxon>
        <taxon>Micromonosporales</taxon>
        <taxon>Micromonosporaceae</taxon>
        <taxon>Salinispora</taxon>
    </lineage>
</organism>